<name>RS6_PARP8</name>
<dbReference type="EMBL" id="CP001043">
    <property type="protein sequence ID" value="ACC70100.1"/>
    <property type="molecule type" value="Genomic_DNA"/>
</dbReference>
<dbReference type="RefSeq" id="WP_012400319.1">
    <property type="nucleotide sequence ID" value="NC_010622.1"/>
</dbReference>
<dbReference type="SMR" id="B2JG18"/>
<dbReference type="STRING" id="391038.Bphy_0911"/>
<dbReference type="KEGG" id="bph:Bphy_0911"/>
<dbReference type="eggNOG" id="COG0360">
    <property type="taxonomic scope" value="Bacteria"/>
</dbReference>
<dbReference type="HOGENOM" id="CLU_113441_6_1_4"/>
<dbReference type="OrthoDB" id="9812702at2"/>
<dbReference type="Proteomes" id="UP000001192">
    <property type="component" value="Chromosome 1"/>
</dbReference>
<dbReference type="GO" id="GO:0022627">
    <property type="term" value="C:cytosolic small ribosomal subunit"/>
    <property type="evidence" value="ECO:0007669"/>
    <property type="project" value="TreeGrafter"/>
</dbReference>
<dbReference type="GO" id="GO:0070181">
    <property type="term" value="F:small ribosomal subunit rRNA binding"/>
    <property type="evidence" value="ECO:0007669"/>
    <property type="project" value="TreeGrafter"/>
</dbReference>
<dbReference type="GO" id="GO:0003735">
    <property type="term" value="F:structural constituent of ribosome"/>
    <property type="evidence" value="ECO:0007669"/>
    <property type="project" value="InterPro"/>
</dbReference>
<dbReference type="GO" id="GO:0006412">
    <property type="term" value="P:translation"/>
    <property type="evidence" value="ECO:0007669"/>
    <property type="project" value="UniProtKB-UniRule"/>
</dbReference>
<dbReference type="CDD" id="cd00473">
    <property type="entry name" value="bS6"/>
    <property type="match status" value="1"/>
</dbReference>
<dbReference type="Gene3D" id="3.30.70.60">
    <property type="match status" value="1"/>
</dbReference>
<dbReference type="HAMAP" id="MF_00360">
    <property type="entry name" value="Ribosomal_bS6"/>
    <property type="match status" value="1"/>
</dbReference>
<dbReference type="InterPro" id="IPR000529">
    <property type="entry name" value="Ribosomal_bS6"/>
</dbReference>
<dbReference type="InterPro" id="IPR035980">
    <property type="entry name" value="Ribosomal_bS6_sf"/>
</dbReference>
<dbReference type="InterPro" id="IPR020814">
    <property type="entry name" value="Ribosomal_S6_plastid/chlpt"/>
</dbReference>
<dbReference type="InterPro" id="IPR014717">
    <property type="entry name" value="Transl_elong_EF1B/ribsomal_bS6"/>
</dbReference>
<dbReference type="NCBIfam" id="TIGR00166">
    <property type="entry name" value="S6"/>
    <property type="match status" value="1"/>
</dbReference>
<dbReference type="PANTHER" id="PTHR21011">
    <property type="entry name" value="MITOCHONDRIAL 28S RIBOSOMAL PROTEIN S6"/>
    <property type="match status" value="1"/>
</dbReference>
<dbReference type="PANTHER" id="PTHR21011:SF1">
    <property type="entry name" value="SMALL RIBOSOMAL SUBUNIT PROTEIN BS6M"/>
    <property type="match status" value="1"/>
</dbReference>
<dbReference type="Pfam" id="PF01250">
    <property type="entry name" value="Ribosomal_S6"/>
    <property type="match status" value="1"/>
</dbReference>
<dbReference type="SUPFAM" id="SSF54995">
    <property type="entry name" value="Ribosomal protein S6"/>
    <property type="match status" value="1"/>
</dbReference>
<evidence type="ECO:0000255" key="1">
    <source>
        <dbReference type="HAMAP-Rule" id="MF_00360"/>
    </source>
</evidence>
<evidence type="ECO:0000256" key="2">
    <source>
        <dbReference type="SAM" id="MobiDB-lite"/>
    </source>
</evidence>
<evidence type="ECO:0000305" key="3"/>
<comment type="function">
    <text evidence="1">Binds together with bS18 to 16S ribosomal RNA.</text>
</comment>
<comment type="similarity">
    <text evidence="1">Belongs to the bacterial ribosomal protein bS6 family.</text>
</comment>
<protein>
    <recommendedName>
        <fullName evidence="1">Small ribosomal subunit protein bS6</fullName>
    </recommendedName>
    <alternativeName>
        <fullName evidence="3">30S ribosomal protein S6</fullName>
    </alternativeName>
</protein>
<reference key="1">
    <citation type="journal article" date="2014" name="Stand. Genomic Sci.">
        <title>Complete genome sequence of Burkholderia phymatum STM815(T), a broad host range and efficient nitrogen-fixing symbiont of Mimosa species.</title>
        <authorList>
            <person name="Moulin L."/>
            <person name="Klonowska A."/>
            <person name="Caroline B."/>
            <person name="Booth K."/>
            <person name="Vriezen J.A."/>
            <person name="Melkonian R."/>
            <person name="James E.K."/>
            <person name="Young J.P."/>
            <person name="Bena G."/>
            <person name="Hauser L."/>
            <person name="Land M."/>
            <person name="Kyrpides N."/>
            <person name="Bruce D."/>
            <person name="Chain P."/>
            <person name="Copeland A."/>
            <person name="Pitluck S."/>
            <person name="Woyke T."/>
            <person name="Lizotte-Waniewski M."/>
            <person name="Bristow J."/>
            <person name="Riley M."/>
        </authorList>
    </citation>
    <scope>NUCLEOTIDE SEQUENCE [LARGE SCALE GENOMIC DNA]</scope>
    <source>
        <strain>DSM 17167 / CIP 108236 / LMG 21445 / STM815</strain>
    </source>
</reference>
<proteinExistence type="inferred from homology"/>
<accession>B2JG18</accession>
<sequence length="124" mass="14304">MRHYEIVFIVHPDQSEQVPAMIERYKTTITSHGGQIHRIEDWGRRQLAYMIEKLAKAHYVCMNIECDQATLDELEHAFKFNDAVLRHLIVKMKKAETGPSPMMKEVQREEAKKAAAAQPTEAQA</sequence>
<organism>
    <name type="scientific">Paraburkholderia phymatum (strain DSM 17167 / CIP 108236 / LMG 21445 / STM815)</name>
    <name type="common">Burkholderia phymatum</name>
    <dbReference type="NCBI Taxonomy" id="391038"/>
    <lineage>
        <taxon>Bacteria</taxon>
        <taxon>Pseudomonadati</taxon>
        <taxon>Pseudomonadota</taxon>
        <taxon>Betaproteobacteria</taxon>
        <taxon>Burkholderiales</taxon>
        <taxon>Burkholderiaceae</taxon>
        <taxon>Paraburkholderia</taxon>
    </lineage>
</organism>
<feature type="chain" id="PRO_1000120720" description="Small ribosomal subunit protein bS6">
    <location>
        <begin position="1"/>
        <end position="124"/>
    </location>
</feature>
<feature type="region of interest" description="Disordered" evidence="2">
    <location>
        <begin position="97"/>
        <end position="124"/>
    </location>
</feature>
<feature type="compositionally biased region" description="Low complexity" evidence="2">
    <location>
        <begin position="114"/>
        <end position="124"/>
    </location>
</feature>
<gene>
    <name evidence="1" type="primary">rpsF</name>
    <name type="ordered locus">Bphy_0911</name>
</gene>
<keyword id="KW-1185">Reference proteome</keyword>
<keyword id="KW-0687">Ribonucleoprotein</keyword>
<keyword id="KW-0689">Ribosomal protein</keyword>
<keyword id="KW-0694">RNA-binding</keyword>
<keyword id="KW-0699">rRNA-binding</keyword>